<sequence length="341" mass="37710">MLRFVVGTYTHLIYGVDADIERKKCKPLWLFEAHEGALTALAVDGIYLASTSSDETIKIFDHTRNVQIADVSVPTDIANACIRDMCFTKNHLLACHDNGQISMWSKGSWLLVHTLKSSSHKGITGIAVHPSEKLALTVGGDGKLRLWDLVRGKGGKVLPLSTIPESILFLNESSFVIMSRRGIDAFKLDLTSLFSFSSKSQLNALCLYQSKLIVGRDNGTVLVLDTSDGKILHEFTAHKKRVKSVYPVDDYLITASSDGSVCIWDKDWNLVIEHNIPEGNRITCMVAMLADSNSEPKNVEDEAAKRQSLDSETSETSSESESESEYYSTSKQPPVKRTKHA</sequence>
<protein>
    <recommendedName>
        <fullName>Shk1 kinase-binding protein 15</fullName>
    </recommendedName>
</protein>
<comment type="function">
    <text evidence="2">Negatively regulates pak1/shk1 kinase activity leading to proper execution of cytoskeletal remodeling and cytokinetic functions.</text>
</comment>
<comment type="function">
    <text evidence="2">Interacts with pak1/shk1.</text>
</comment>
<dbReference type="EMBL" id="AY030407">
    <property type="protein sequence ID" value="AAK51600.1"/>
    <property type="molecule type" value="Genomic_DNA"/>
</dbReference>
<dbReference type="EMBL" id="CU329672">
    <property type="protein sequence ID" value="CAA20747.1"/>
    <property type="molecule type" value="Genomic_DNA"/>
</dbReference>
<dbReference type="PIR" id="T41098">
    <property type="entry name" value="T41098"/>
</dbReference>
<dbReference type="RefSeq" id="NP_587918.1">
    <property type="nucleotide sequence ID" value="NM_001022909.2"/>
</dbReference>
<dbReference type="SMR" id="O74453"/>
<dbReference type="BioGRID" id="275340">
    <property type="interactions" value="2"/>
</dbReference>
<dbReference type="FunCoup" id="O74453">
    <property type="interactions" value="444"/>
</dbReference>
<dbReference type="STRING" id="284812.O74453"/>
<dbReference type="iPTMnet" id="O74453"/>
<dbReference type="PaxDb" id="4896-SPCC16C4.08c.1"/>
<dbReference type="EnsemblFungi" id="SPCC16C4.08c.1">
    <property type="protein sequence ID" value="SPCC16C4.08c.1:pep"/>
    <property type="gene ID" value="SPCC16C4.08c"/>
</dbReference>
<dbReference type="GeneID" id="2538757"/>
<dbReference type="KEGG" id="spo:2538757"/>
<dbReference type="PomBase" id="SPCC16C4.08c">
    <property type="gene designation" value="skb15"/>
</dbReference>
<dbReference type="VEuPathDB" id="FungiDB:SPCC16C4.08c"/>
<dbReference type="eggNOG" id="KOG0294">
    <property type="taxonomic scope" value="Eukaryota"/>
</dbReference>
<dbReference type="HOGENOM" id="CLU_031466_2_0_1"/>
<dbReference type="InParanoid" id="O74453"/>
<dbReference type="OMA" id="IIIWRTK"/>
<dbReference type="PhylomeDB" id="O74453"/>
<dbReference type="PRO" id="PR:O74453"/>
<dbReference type="Proteomes" id="UP000002485">
    <property type="component" value="Chromosome III"/>
</dbReference>
<dbReference type="GO" id="GO:0005730">
    <property type="term" value="C:nucleolus"/>
    <property type="evidence" value="ECO:0000318"/>
    <property type="project" value="GO_Central"/>
</dbReference>
<dbReference type="GO" id="GO:0005634">
    <property type="term" value="C:nucleus"/>
    <property type="evidence" value="ECO:0000314"/>
    <property type="project" value="PomBase"/>
</dbReference>
<dbReference type="GO" id="GO:0030684">
    <property type="term" value="C:preribosome"/>
    <property type="evidence" value="ECO:0000314"/>
    <property type="project" value="PomBase"/>
</dbReference>
<dbReference type="GO" id="GO:0004860">
    <property type="term" value="F:protein kinase inhibitor activity"/>
    <property type="evidence" value="ECO:0000315"/>
    <property type="project" value="PomBase"/>
</dbReference>
<dbReference type="GO" id="GO:0000463">
    <property type="term" value="P:maturation of LSU-rRNA from tricistronic rRNA transcript (SSU-rRNA, 5.8S rRNA, LSU-rRNA)"/>
    <property type="evidence" value="ECO:0000318"/>
    <property type="project" value="GO_Central"/>
</dbReference>
<dbReference type="GO" id="GO:0032956">
    <property type="term" value="P:regulation of actin cytoskeleton organization"/>
    <property type="evidence" value="ECO:0000315"/>
    <property type="project" value="PomBase"/>
</dbReference>
<dbReference type="GO" id="GO:0070507">
    <property type="term" value="P:regulation of microtubule cytoskeleton organization"/>
    <property type="evidence" value="ECO:0000315"/>
    <property type="project" value="PomBase"/>
</dbReference>
<dbReference type="GO" id="GO:0042254">
    <property type="term" value="P:ribosome biogenesis"/>
    <property type="evidence" value="ECO:0000315"/>
    <property type="project" value="PomBase"/>
</dbReference>
<dbReference type="GO" id="GO:0023052">
    <property type="term" value="P:signaling"/>
    <property type="evidence" value="ECO:0000303"/>
    <property type="project" value="PomBase"/>
</dbReference>
<dbReference type="Gene3D" id="2.130.10.10">
    <property type="entry name" value="YVTN repeat-like/Quinoprotein amine dehydrogenase"/>
    <property type="match status" value="2"/>
</dbReference>
<dbReference type="InterPro" id="IPR051959">
    <property type="entry name" value="PAK1-Kinase_Regulator"/>
</dbReference>
<dbReference type="InterPro" id="IPR018391">
    <property type="entry name" value="PQQ_b-propeller_rpt"/>
</dbReference>
<dbReference type="InterPro" id="IPR015943">
    <property type="entry name" value="WD40/YVTN_repeat-like_dom_sf"/>
</dbReference>
<dbReference type="InterPro" id="IPR019775">
    <property type="entry name" value="WD40_repeat_CS"/>
</dbReference>
<dbReference type="InterPro" id="IPR036322">
    <property type="entry name" value="WD40_repeat_dom_sf"/>
</dbReference>
<dbReference type="InterPro" id="IPR001680">
    <property type="entry name" value="WD40_rpt"/>
</dbReference>
<dbReference type="PANTHER" id="PTHR44675:SF1">
    <property type="entry name" value="P21-ACTIVATED PROTEIN KINASE-INTERACTING PROTEIN 1"/>
    <property type="match status" value="1"/>
</dbReference>
<dbReference type="PANTHER" id="PTHR44675">
    <property type="entry name" value="PAK1 INTERACTING PROTEIN 1"/>
    <property type="match status" value="1"/>
</dbReference>
<dbReference type="Pfam" id="PF00400">
    <property type="entry name" value="WD40"/>
    <property type="match status" value="3"/>
</dbReference>
<dbReference type="SMART" id="SM00564">
    <property type="entry name" value="PQQ"/>
    <property type="match status" value="1"/>
</dbReference>
<dbReference type="SMART" id="SM00320">
    <property type="entry name" value="WD40"/>
    <property type="match status" value="4"/>
</dbReference>
<dbReference type="SUPFAM" id="SSF50978">
    <property type="entry name" value="WD40 repeat-like"/>
    <property type="match status" value="1"/>
</dbReference>
<dbReference type="PROSITE" id="PS00678">
    <property type="entry name" value="WD_REPEATS_1"/>
    <property type="match status" value="1"/>
</dbReference>
<dbReference type="PROSITE" id="PS50082">
    <property type="entry name" value="WD_REPEATS_2"/>
    <property type="match status" value="2"/>
</dbReference>
<dbReference type="PROSITE" id="PS50294">
    <property type="entry name" value="WD_REPEATS_REGION"/>
    <property type="match status" value="2"/>
</dbReference>
<accession>O74453</accession>
<accession>Q96VR0</accession>
<reference key="1">
    <citation type="journal article" date="2001" name="Mol. Cell">
        <title>Genetic and molecular characterization of Skb15, a highly conserved inhibitor of the fission yeast PAK, Shk1.</title>
        <authorList>
            <person name="Kim H.W."/>
            <person name="Yang P."/>
            <person name="Qyang Y."/>
            <person name="Lai H."/>
            <person name="Du H."/>
            <person name="Henkel J.S."/>
            <person name="Kumar K."/>
            <person name="Bao S."/>
            <person name="Liu M."/>
            <person name="Marcus S."/>
        </authorList>
    </citation>
    <scope>NUCLEOTIDE SEQUENCE [GENOMIC DNA]</scope>
    <scope>FUNCTION</scope>
</reference>
<reference key="2">
    <citation type="journal article" date="2002" name="Nature">
        <title>The genome sequence of Schizosaccharomyces pombe.</title>
        <authorList>
            <person name="Wood V."/>
            <person name="Gwilliam R."/>
            <person name="Rajandream M.A."/>
            <person name="Lyne M.H."/>
            <person name="Lyne R."/>
            <person name="Stewart A."/>
            <person name="Sgouros J.G."/>
            <person name="Peat N."/>
            <person name="Hayles J."/>
            <person name="Baker S.G."/>
            <person name="Basham D."/>
            <person name="Bowman S."/>
            <person name="Brooks K."/>
            <person name="Brown D."/>
            <person name="Brown S."/>
            <person name="Chillingworth T."/>
            <person name="Churcher C.M."/>
            <person name="Collins M."/>
            <person name="Connor R."/>
            <person name="Cronin A."/>
            <person name="Davis P."/>
            <person name="Feltwell T."/>
            <person name="Fraser A."/>
            <person name="Gentles S."/>
            <person name="Goble A."/>
            <person name="Hamlin N."/>
            <person name="Harris D.E."/>
            <person name="Hidalgo J."/>
            <person name="Hodgson G."/>
            <person name="Holroyd S."/>
            <person name="Hornsby T."/>
            <person name="Howarth S."/>
            <person name="Huckle E.J."/>
            <person name="Hunt S."/>
            <person name="Jagels K."/>
            <person name="James K.D."/>
            <person name="Jones L."/>
            <person name="Jones M."/>
            <person name="Leather S."/>
            <person name="McDonald S."/>
            <person name="McLean J."/>
            <person name="Mooney P."/>
            <person name="Moule S."/>
            <person name="Mungall K.L."/>
            <person name="Murphy L.D."/>
            <person name="Niblett D."/>
            <person name="Odell C."/>
            <person name="Oliver K."/>
            <person name="O'Neil S."/>
            <person name="Pearson D."/>
            <person name="Quail M.A."/>
            <person name="Rabbinowitsch E."/>
            <person name="Rutherford K.M."/>
            <person name="Rutter S."/>
            <person name="Saunders D."/>
            <person name="Seeger K."/>
            <person name="Sharp S."/>
            <person name="Skelton J."/>
            <person name="Simmonds M.N."/>
            <person name="Squares R."/>
            <person name="Squares S."/>
            <person name="Stevens K."/>
            <person name="Taylor K."/>
            <person name="Taylor R.G."/>
            <person name="Tivey A."/>
            <person name="Walsh S.V."/>
            <person name="Warren T."/>
            <person name="Whitehead S."/>
            <person name="Woodward J.R."/>
            <person name="Volckaert G."/>
            <person name="Aert R."/>
            <person name="Robben J."/>
            <person name="Grymonprez B."/>
            <person name="Weltjens I."/>
            <person name="Vanstreels E."/>
            <person name="Rieger M."/>
            <person name="Schaefer M."/>
            <person name="Mueller-Auer S."/>
            <person name="Gabel C."/>
            <person name="Fuchs M."/>
            <person name="Duesterhoeft A."/>
            <person name="Fritzc C."/>
            <person name="Holzer E."/>
            <person name="Moestl D."/>
            <person name="Hilbert H."/>
            <person name="Borzym K."/>
            <person name="Langer I."/>
            <person name="Beck A."/>
            <person name="Lehrach H."/>
            <person name="Reinhardt R."/>
            <person name="Pohl T.M."/>
            <person name="Eger P."/>
            <person name="Zimmermann W."/>
            <person name="Wedler H."/>
            <person name="Wambutt R."/>
            <person name="Purnelle B."/>
            <person name="Goffeau A."/>
            <person name="Cadieu E."/>
            <person name="Dreano S."/>
            <person name="Gloux S."/>
            <person name="Lelaure V."/>
            <person name="Mottier S."/>
            <person name="Galibert F."/>
            <person name="Aves S.J."/>
            <person name="Xiang Z."/>
            <person name="Hunt C."/>
            <person name="Moore K."/>
            <person name="Hurst S.M."/>
            <person name="Lucas M."/>
            <person name="Rochet M."/>
            <person name="Gaillardin C."/>
            <person name="Tallada V.A."/>
            <person name="Garzon A."/>
            <person name="Thode G."/>
            <person name="Daga R.R."/>
            <person name="Cruzado L."/>
            <person name="Jimenez J."/>
            <person name="Sanchez M."/>
            <person name="del Rey F."/>
            <person name="Benito J."/>
            <person name="Dominguez A."/>
            <person name="Revuelta J.L."/>
            <person name="Moreno S."/>
            <person name="Armstrong J."/>
            <person name="Forsburg S.L."/>
            <person name="Cerutti L."/>
            <person name="Lowe T."/>
            <person name="McCombie W.R."/>
            <person name="Paulsen I."/>
            <person name="Potashkin J."/>
            <person name="Shpakovski G.V."/>
            <person name="Ussery D."/>
            <person name="Barrell B.G."/>
            <person name="Nurse P."/>
        </authorList>
    </citation>
    <scope>NUCLEOTIDE SEQUENCE [LARGE SCALE GENOMIC DNA]</scope>
    <source>
        <strain>972 / ATCC 24843</strain>
    </source>
</reference>
<proteinExistence type="predicted"/>
<name>SKB15_SCHPO</name>
<gene>
    <name type="primary">skb15</name>
    <name type="ORF">SPCC16C4.08c</name>
</gene>
<keyword id="KW-1185">Reference proteome</keyword>
<keyword id="KW-0677">Repeat</keyword>
<keyword id="KW-0853">WD repeat</keyword>
<evidence type="ECO:0000256" key="1">
    <source>
        <dbReference type="SAM" id="MobiDB-lite"/>
    </source>
</evidence>
<evidence type="ECO:0000269" key="2">
    <source>
    </source>
</evidence>
<evidence type="ECO:0000305" key="3"/>
<feature type="chain" id="PRO_0000051217" description="Shk1 kinase-binding protein 15">
    <location>
        <begin position="1"/>
        <end position="341"/>
    </location>
</feature>
<feature type="repeat" description="WD 1">
    <location>
        <begin position="33"/>
        <end position="70"/>
    </location>
</feature>
<feature type="repeat" description="WD 2">
    <location>
        <begin position="77"/>
        <end position="114"/>
    </location>
</feature>
<feature type="repeat" description="WD 3">
    <location>
        <begin position="119"/>
        <end position="157"/>
    </location>
</feature>
<feature type="repeat" description="WD 4">
    <location>
        <begin position="197"/>
        <end position="234"/>
    </location>
</feature>
<feature type="repeat" description="WD 5">
    <location>
        <begin position="237"/>
        <end position="274"/>
    </location>
</feature>
<feature type="region of interest" description="Disordered" evidence="1">
    <location>
        <begin position="293"/>
        <end position="341"/>
    </location>
</feature>
<feature type="compositionally biased region" description="Basic and acidic residues" evidence="1">
    <location>
        <begin position="297"/>
        <end position="309"/>
    </location>
</feature>
<feature type="sequence conflict" description="In Ref. 1; AAK51600." evidence="3" ref="1">
    <original>G</original>
    <variation>C</variation>
    <location>
        <position position="122"/>
    </location>
</feature>
<organism>
    <name type="scientific">Schizosaccharomyces pombe (strain 972 / ATCC 24843)</name>
    <name type="common">Fission yeast</name>
    <dbReference type="NCBI Taxonomy" id="284812"/>
    <lineage>
        <taxon>Eukaryota</taxon>
        <taxon>Fungi</taxon>
        <taxon>Dikarya</taxon>
        <taxon>Ascomycota</taxon>
        <taxon>Taphrinomycotina</taxon>
        <taxon>Schizosaccharomycetes</taxon>
        <taxon>Schizosaccharomycetales</taxon>
        <taxon>Schizosaccharomycetaceae</taxon>
        <taxon>Schizosaccharomyces</taxon>
    </lineage>
</organism>